<evidence type="ECO:0000250" key="1">
    <source>
        <dbReference type="UniProtKB" id="P06935"/>
    </source>
</evidence>
<evidence type="ECO:0000250" key="2">
    <source>
        <dbReference type="UniProtKB" id="P14336"/>
    </source>
</evidence>
<evidence type="ECO:0000250" key="3">
    <source>
        <dbReference type="UniProtKB" id="P17763"/>
    </source>
</evidence>
<evidence type="ECO:0000255" key="4"/>
<evidence type="ECO:0000255" key="5">
    <source>
        <dbReference type="PROSITE-ProRule" id="PRU00498"/>
    </source>
</evidence>
<protein>
    <recommendedName>
        <fullName>Genome polyprotein</fullName>
    </recommendedName>
    <component>
        <recommendedName>
            <fullName>Envelope protein E</fullName>
        </recommendedName>
    </component>
</protein>
<organism>
    <name type="scientific">Louping ill virus (strain SB 526)</name>
    <name type="common">Li</name>
    <dbReference type="NCBI Taxonomy" id="31640"/>
    <lineage>
        <taxon>Viruses</taxon>
        <taxon>Riboviria</taxon>
        <taxon>Orthornavirae</taxon>
        <taxon>Kitrinoviricota</taxon>
        <taxon>Flasuviricetes</taxon>
        <taxon>Amarillovirales</taxon>
        <taxon>Flaviviridae</taxon>
        <taxon>Orthoflavivirus</taxon>
        <taxon>Orthoflavivirus loupingi</taxon>
    </lineage>
</organism>
<name>POLG_LIVSB</name>
<organismHost>
    <name type="scientific">Bos taurus</name>
    <name type="common">Bovine</name>
    <dbReference type="NCBI Taxonomy" id="9913"/>
</organismHost>
<organismHost>
    <name type="scientific">Canis lupus familiaris</name>
    <name type="common">Dog</name>
    <name type="synonym">Canis familiaris</name>
    <dbReference type="NCBI Taxonomy" id="9615"/>
</organismHost>
<organismHost>
    <name type="scientific">Cervinae</name>
    <dbReference type="NCBI Taxonomy" id="34878"/>
</organismHost>
<organismHost>
    <name type="scientific">Equus caballus</name>
    <name type="common">Horse</name>
    <dbReference type="NCBI Taxonomy" id="9796"/>
</organismHost>
<organismHost>
    <name type="scientific">Homo sapiens</name>
    <name type="common">Human</name>
    <dbReference type="NCBI Taxonomy" id="9606"/>
</organismHost>
<organismHost>
    <name type="scientific">Ixodes ricinus</name>
    <name type="common">Common tick</name>
    <name type="synonym">Acarus ricinus</name>
    <dbReference type="NCBI Taxonomy" id="34613"/>
</organismHost>
<organismHost>
    <name type="scientific">Ovis aries</name>
    <name type="common">Sheep</name>
    <dbReference type="NCBI Taxonomy" id="9940"/>
</organismHost>
<organismHost>
    <name type="scientific">Sus scrofa</name>
    <name type="common">Pig</name>
    <dbReference type="NCBI Taxonomy" id="9823"/>
</organismHost>
<feature type="chain" id="PRO_0000405187" description="Genome polyprotein">
    <location>
        <begin position="1" status="less than"/>
        <end position="496" status="greater than"/>
    </location>
</feature>
<feature type="chain" id="PRO_0000037835" description="Envelope protein E" evidence="1">
    <location>
        <begin position="1"/>
        <end position="496"/>
    </location>
</feature>
<feature type="topological domain" description="Extracellular" evidence="4">
    <location>
        <begin position="1" status="less than"/>
        <end position="447"/>
    </location>
</feature>
<feature type="transmembrane region" description="Helical" evidence="4">
    <location>
        <begin position="448"/>
        <end position="468"/>
    </location>
</feature>
<feature type="topological domain" description="Cytoplasmic" evidence="4">
    <location>
        <begin position="469"/>
        <end position="479"/>
    </location>
</feature>
<feature type="transmembrane region" description="Helical" evidence="4">
    <location>
        <begin position="480"/>
        <end position="496" status="greater than"/>
    </location>
</feature>
<feature type="region of interest" description="Fusion peptide" evidence="2">
    <location>
        <begin position="98"/>
        <end position="111"/>
    </location>
</feature>
<feature type="glycosylation site" description="N-linked (GlcNAc...) asparagine; by host" evidence="5">
    <location>
        <position position="154"/>
    </location>
</feature>
<feature type="disulfide bond" evidence="2">
    <location>
        <begin position="3"/>
        <end position="30"/>
    </location>
</feature>
<feature type="disulfide bond" evidence="3">
    <location>
        <begin position="60"/>
        <end position="121"/>
    </location>
</feature>
<feature type="disulfide bond" evidence="2">
    <location>
        <begin position="60"/>
        <end position="116"/>
    </location>
</feature>
<feature type="disulfide bond" evidence="2">
    <location>
        <begin position="74"/>
        <end position="105"/>
    </location>
</feature>
<feature type="disulfide bond" evidence="2">
    <location>
        <begin position="92"/>
        <end position="121"/>
    </location>
</feature>
<feature type="disulfide bond" evidence="3">
    <location>
        <begin position="92"/>
        <end position="116"/>
    </location>
</feature>
<feature type="disulfide bond" evidence="2">
    <location>
        <begin position="186"/>
        <end position="290"/>
    </location>
</feature>
<feature type="disulfide bond" evidence="2">
    <location>
        <begin position="307"/>
        <end position="338"/>
    </location>
</feature>
<feature type="non-terminal residue">
    <location>
        <position position="1"/>
    </location>
</feature>
<feature type="non-terminal residue">
    <location>
        <position position="496"/>
    </location>
</feature>
<reference key="1">
    <citation type="journal article" date="1992" name="Virology">
        <title>Nucleotide sequence of the envelope glycoprotein of Negishi virus shows very close homology to louping ill virus.</title>
        <authorList>
            <person name="Venugopal K."/>
            <person name="Buckley A."/>
            <person name="Reid H.W."/>
            <person name="Gould E.A."/>
        </authorList>
    </citation>
    <scope>NUCLEOTIDE SEQUENCE [GENOMIC RNA]</scope>
</reference>
<comment type="function">
    <molecule>Envelope protein E</molecule>
    <text evidence="3">Binds to host cell surface receptor and mediates fusion between viral and cellular membranes. Envelope protein is synthesized in the endoplasmic reticulum in the form of heterodimer with protein prM. They play a role in virion budding in the ER, and the newly formed immature particle is covered with 60 spikes composed of heterodimer between precursor prM and envelope protein E. The virion is transported to the Golgi apparatus where the low pH causes dissociation of PrM-E heterodimers and formation of E homodimers. prM-E cleavage is ineficient, and many virions are only partially matured. These uncleaved prM would play a role in immune evasion.</text>
</comment>
<comment type="subunit">
    <molecule>Envelope protein E</molecule>
    <text evidence="3">Homodimer; in the endoplasmic reticulum and Golgi.</text>
</comment>
<comment type="subcellular location">
    <molecule>Envelope protein E</molecule>
    <subcellularLocation>
        <location evidence="3">Virion membrane</location>
        <topology evidence="4">Multi-pass membrane protein</topology>
    </subcellularLocation>
    <subcellularLocation>
        <location evidence="3">Host endoplasmic reticulum membrane</location>
        <topology evidence="4">Multi-pass membrane protein</topology>
    </subcellularLocation>
</comment>
<comment type="PTM">
    <molecule>Envelope protein E</molecule>
    <text evidence="3">N-glycosylated.</text>
</comment>
<proteinExistence type="inferred from homology"/>
<dbReference type="EMBL" id="M94957">
    <property type="protein sequence ID" value="AAA46282.1"/>
    <property type="molecule type" value="Genomic_RNA"/>
</dbReference>
<dbReference type="PIR" id="B43383">
    <property type="entry name" value="B43383"/>
</dbReference>
<dbReference type="SMR" id="Q02012"/>
<dbReference type="GO" id="GO:0044167">
    <property type="term" value="C:host cell endoplasmic reticulum membrane"/>
    <property type="evidence" value="ECO:0007669"/>
    <property type="project" value="UniProtKB-SubCell"/>
</dbReference>
<dbReference type="GO" id="GO:0016020">
    <property type="term" value="C:membrane"/>
    <property type="evidence" value="ECO:0007669"/>
    <property type="project" value="UniProtKB-KW"/>
</dbReference>
<dbReference type="GO" id="GO:0019031">
    <property type="term" value="C:viral envelope"/>
    <property type="evidence" value="ECO:0007669"/>
    <property type="project" value="UniProtKB-KW"/>
</dbReference>
<dbReference type="GO" id="GO:0055036">
    <property type="term" value="C:virion membrane"/>
    <property type="evidence" value="ECO:0007669"/>
    <property type="project" value="UniProtKB-SubCell"/>
</dbReference>
<dbReference type="GO" id="GO:0046983">
    <property type="term" value="F:protein dimerization activity"/>
    <property type="evidence" value="ECO:0007669"/>
    <property type="project" value="InterPro"/>
</dbReference>
<dbReference type="GO" id="GO:0075512">
    <property type="term" value="P:clathrin-dependent endocytosis of virus by host cell"/>
    <property type="evidence" value="ECO:0007669"/>
    <property type="project" value="UniProtKB-KW"/>
</dbReference>
<dbReference type="GO" id="GO:0039654">
    <property type="term" value="P:fusion of virus membrane with host endosome membrane"/>
    <property type="evidence" value="ECO:0007669"/>
    <property type="project" value="UniProtKB-KW"/>
</dbReference>
<dbReference type="GO" id="GO:0052170">
    <property type="term" value="P:symbiont-mediated suppression of host innate immune response"/>
    <property type="evidence" value="ECO:0007669"/>
    <property type="project" value="UniProtKB-KW"/>
</dbReference>
<dbReference type="GO" id="GO:0019062">
    <property type="term" value="P:virion attachment to host cell"/>
    <property type="evidence" value="ECO:0007669"/>
    <property type="project" value="UniProtKB-KW"/>
</dbReference>
<dbReference type="CDD" id="cd12149">
    <property type="entry name" value="Flavi_E_C"/>
    <property type="match status" value="1"/>
</dbReference>
<dbReference type="FunFam" id="1.20.1280.260:FF:000001">
    <property type="entry name" value="Envelope glycoprotein"/>
    <property type="match status" value="1"/>
</dbReference>
<dbReference type="Gene3D" id="1.20.1280.260">
    <property type="match status" value="1"/>
</dbReference>
<dbReference type="Gene3D" id="2.60.40.350">
    <property type="match status" value="1"/>
</dbReference>
<dbReference type="Gene3D" id="2.60.98.10">
    <property type="entry name" value="Tick-borne Encephalitis virus Glycoprotein, domain 1"/>
    <property type="match status" value="1"/>
</dbReference>
<dbReference type="Gene3D" id="3.30.67.10">
    <property type="entry name" value="Viral Envelope Glycoprotein, domain 2"/>
    <property type="match status" value="1"/>
</dbReference>
<dbReference type="Gene3D" id="3.30.387.10">
    <property type="entry name" value="Viral Envelope Glycoprotein, domain 3"/>
    <property type="match status" value="1"/>
</dbReference>
<dbReference type="InterPro" id="IPR013755">
    <property type="entry name" value="Flav_gly_cen_dom_subdom1"/>
</dbReference>
<dbReference type="InterPro" id="IPR027287">
    <property type="entry name" value="Flavi_E_Ig-like"/>
</dbReference>
<dbReference type="InterPro" id="IPR026470">
    <property type="entry name" value="Flavi_E_Stem/Anchor_dom"/>
</dbReference>
<dbReference type="InterPro" id="IPR038345">
    <property type="entry name" value="Flavi_E_Stem/Anchor_dom_sf"/>
</dbReference>
<dbReference type="InterPro" id="IPR011998">
    <property type="entry name" value="Flavi_Glycoprot_E_cen/dimer"/>
</dbReference>
<dbReference type="InterPro" id="IPR000336">
    <property type="entry name" value="Flavivir/Alphavir_Ig-like_sf"/>
</dbReference>
<dbReference type="InterPro" id="IPR036253">
    <property type="entry name" value="Glycoprot_cen/dimer_sf"/>
</dbReference>
<dbReference type="InterPro" id="IPR038055">
    <property type="entry name" value="Glycoprot_E_dimer_dom"/>
</dbReference>
<dbReference type="InterPro" id="IPR013756">
    <property type="entry name" value="GlyE_cen_dom_subdom2"/>
</dbReference>
<dbReference type="InterPro" id="IPR014756">
    <property type="entry name" value="Ig_E-set"/>
</dbReference>
<dbReference type="NCBIfam" id="TIGR04240">
    <property type="entry name" value="flavi_E_stem"/>
    <property type="match status" value="1"/>
</dbReference>
<dbReference type="Pfam" id="PF21659">
    <property type="entry name" value="Flavi_E_stem"/>
    <property type="match status" value="1"/>
</dbReference>
<dbReference type="Pfam" id="PF02832">
    <property type="entry name" value="Flavi_glycop_C"/>
    <property type="match status" value="1"/>
</dbReference>
<dbReference type="Pfam" id="PF00869">
    <property type="entry name" value="Flavi_glycoprot"/>
    <property type="match status" value="1"/>
</dbReference>
<dbReference type="SUPFAM" id="SSF81296">
    <property type="entry name" value="E set domains"/>
    <property type="match status" value="1"/>
</dbReference>
<dbReference type="SUPFAM" id="SSF56983">
    <property type="entry name" value="Viral glycoprotein, central and dimerisation domains"/>
    <property type="match status" value="1"/>
</dbReference>
<sequence length="496" mass="53594">SRCTHLENRDFVTGTQGTTRVTLVLELGGCVTITAEGKPSVDVWLDAIYQESPAKTREYCLHAKLSETKVAARCPTMGPAALAEERQIGTVCKRDQSDRGWGNHCGLFGKGSIVACVKAACEAKKKATGYVYDANKIVYTVKVEPHTGDYVAANETHKGRKTATFTVSSEKTILTLGEYGDVSLLCRVASGVDLAQTIILELDKTAEHLPTAWQVHRDWFNDLALPWKHEGNPHWNNAERLVEFGAPHAVKMDVYNLGDQTGVLLKALAGVPVAHIEGNKYHLKSGHVTCEVGLEKLKMKGLTYTMCDKSKFAWKRTPTDSGHDTVVMEVTFSGSKPCRIPVRAVAHGSPDVNVAMLITPNPTIENDGGGFIEMQLPPGDNIIYVGELSHQWFQTGSSIGRVFQKTRKGIERLTVIGEHAWDFGSAGGFFSSIGKAVHTVLGGAFNSIFGGVGFLPKLLMGVALAWLGLNTRNPTMSISFLLTGGLVLAMTLGVGA</sequence>
<keyword id="KW-1165">Clathrin-mediated endocytosis of virus by host</keyword>
<keyword id="KW-0165">Cleavage on pair of basic residues</keyword>
<keyword id="KW-1015">Disulfide bond</keyword>
<keyword id="KW-1170">Fusion of virus membrane with host endosomal membrane</keyword>
<keyword id="KW-1168">Fusion of virus membrane with host membrane</keyword>
<keyword id="KW-0325">Glycoprotein</keyword>
<keyword id="KW-1038">Host endoplasmic reticulum</keyword>
<keyword id="KW-1043">Host membrane</keyword>
<keyword id="KW-0945">Host-virus interaction</keyword>
<keyword id="KW-1090">Inhibition of host innate immune response by virus</keyword>
<keyword id="KW-0472">Membrane</keyword>
<keyword id="KW-0941">Suppressor of RNA silencing</keyword>
<keyword id="KW-0812">Transmembrane</keyword>
<keyword id="KW-1133">Transmembrane helix</keyword>
<keyword id="KW-1161">Viral attachment to host cell</keyword>
<keyword id="KW-0261">Viral envelope protein</keyword>
<keyword id="KW-0899">Viral immunoevasion</keyword>
<keyword id="KW-1162">Viral penetration into host cytoplasm</keyword>
<keyword id="KW-0946">Virion</keyword>
<keyword id="KW-1164">Virus endocytosis by host</keyword>
<keyword id="KW-1160">Virus entry into host cell</keyword>
<keyword id="KW-0862">Zinc</keyword>
<accession>Q02012</accession>